<keyword id="KW-0560">Oxidoreductase</keyword>
<comment type="similarity">
    <text evidence="2">Belongs to the short-chain dehydrogenases/reductases (SDR) family.</text>
</comment>
<protein>
    <recommendedName>
        <fullName>Oxidoreductase UcpA</fullName>
        <ecNumber>1.-.-.-</ecNumber>
    </recommendedName>
</protein>
<proteinExistence type="inferred from homology"/>
<reference key="1">
    <citation type="journal article" date="2001" name="Nature">
        <title>Complete genome sequence of a multiple drug resistant Salmonella enterica serovar Typhi CT18.</title>
        <authorList>
            <person name="Parkhill J."/>
            <person name="Dougan G."/>
            <person name="James K.D."/>
            <person name="Thomson N.R."/>
            <person name="Pickard D."/>
            <person name="Wain J."/>
            <person name="Churcher C.M."/>
            <person name="Mungall K.L."/>
            <person name="Bentley S.D."/>
            <person name="Holden M.T.G."/>
            <person name="Sebaihia M."/>
            <person name="Baker S."/>
            <person name="Basham D."/>
            <person name="Brooks K."/>
            <person name="Chillingworth T."/>
            <person name="Connerton P."/>
            <person name="Cronin A."/>
            <person name="Davis P."/>
            <person name="Davies R.M."/>
            <person name="Dowd L."/>
            <person name="White N."/>
            <person name="Farrar J."/>
            <person name="Feltwell T."/>
            <person name="Hamlin N."/>
            <person name="Haque A."/>
            <person name="Hien T.T."/>
            <person name="Holroyd S."/>
            <person name="Jagels K."/>
            <person name="Krogh A."/>
            <person name="Larsen T.S."/>
            <person name="Leather S."/>
            <person name="Moule S."/>
            <person name="O'Gaora P."/>
            <person name="Parry C."/>
            <person name="Quail M.A."/>
            <person name="Rutherford K.M."/>
            <person name="Simmonds M."/>
            <person name="Skelton J."/>
            <person name="Stevens K."/>
            <person name="Whitehead S."/>
            <person name="Barrell B.G."/>
        </authorList>
    </citation>
    <scope>NUCLEOTIDE SEQUENCE [LARGE SCALE GENOMIC DNA]</scope>
    <source>
        <strain>CT18</strain>
    </source>
</reference>
<reference key="2">
    <citation type="journal article" date="2003" name="J. Bacteriol.">
        <title>Comparative genomics of Salmonella enterica serovar Typhi strains Ty2 and CT18.</title>
        <authorList>
            <person name="Deng W."/>
            <person name="Liou S.-R."/>
            <person name="Plunkett G. III"/>
            <person name="Mayhew G.F."/>
            <person name="Rose D.J."/>
            <person name="Burland V."/>
            <person name="Kodoyianni V."/>
            <person name="Schwartz D.C."/>
            <person name="Blattner F.R."/>
        </authorList>
    </citation>
    <scope>NUCLEOTIDE SEQUENCE [LARGE SCALE GENOMIC DNA]</scope>
    <source>
        <strain>ATCC 700931 / Ty2</strain>
    </source>
</reference>
<evidence type="ECO:0000250" key="1"/>
<evidence type="ECO:0000305" key="2"/>
<dbReference type="EC" id="1.-.-.-"/>
<dbReference type="EMBL" id="AL513382">
    <property type="protein sequence ID" value="CAD07676.1"/>
    <property type="molecule type" value="Genomic_DNA"/>
</dbReference>
<dbReference type="EMBL" id="AE014613">
    <property type="protein sequence ID" value="AAO68131.1"/>
    <property type="molecule type" value="Genomic_DNA"/>
</dbReference>
<dbReference type="RefSeq" id="NP_456980.1">
    <property type="nucleotide sequence ID" value="NC_003198.1"/>
</dbReference>
<dbReference type="RefSeq" id="WP_000517460.1">
    <property type="nucleotide sequence ID" value="NZ_WSUR01000025.1"/>
</dbReference>
<dbReference type="SMR" id="P0A2D2"/>
<dbReference type="STRING" id="220341.gene:17586580"/>
<dbReference type="KEGG" id="stt:t0413"/>
<dbReference type="KEGG" id="sty:STY2682"/>
<dbReference type="PATRIC" id="fig|220341.7.peg.2719"/>
<dbReference type="eggNOG" id="COG1028">
    <property type="taxonomic scope" value="Bacteria"/>
</dbReference>
<dbReference type="HOGENOM" id="CLU_010194_1_0_6"/>
<dbReference type="OMA" id="YMTGTDF"/>
<dbReference type="OrthoDB" id="9806974at2"/>
<dbReference type="Proteomes" id="UP000000541">
    <property type="component" value="Chromosome"/>
</dbReference>
<dbReference type="Proteomes" id="UP000002670">
    <property type="component" value="Chromosome"/>
</dbReference>
<dbReference type="GO" id="GO:0016616">
    <property type="term" value="F:oxidoreductase activity, acting on the CH-OH group of donors, NAD or NADP as acceptor"/>
    <property type="evidence" value="ECO:0007669"/>
    <property type="project" value="TreeGrafter"/>
</dbReference>
<dbReference type="CDD" id="cd05368">
    <property type="entry name" value="DHRS6_like_SDR_c"/>
    <property type="match status" value="1"/>
</dbReference>
<dbReference type="FunFam" id="3.40.50.720:FF:000084">
    <property type="entry name" value="Short-chain dehydrogenase reductase"/>
    <property type="match status" value="1"/>
</dbReference>
<dbReference type="Gene3D" id="3.40.50.720">
    <property type="entry name" value="NAD(P)-binding Rossmann-like Domain"/>
    <property type="match status" value="1"/>
</dbReference>
<dbReference type="InterPro" id="IPR036291">
    <property type="entry name" value="NAD(P)-bd_dom_sf"/>
</dbReference>
<dbReference type="InterPro" id="IPR002347">
    <property type="entry name" value="SDR_fam"/>
</dbReference>
<dbReference type="NCBIfam" id="NF005559">
    <property type="entry name" value="PRK07231.1"/>
    <property type="match status" value="1"/>
</dbReference>
<dbReference type="NCBIfam" id="NF006080">
    <property type="entry name" value="PRK08226.1"/>
    <property type="match status" value="1"/>
</dbReference>
<dbReference type="PANTHER" id="PTHR42760:SF133">
    <property type="entry name" value="3-OXOACYL-[ACYL-CARRIER-PROTEIN] REDUCTASE"/>
    <property type="match status" value="1"/>
</dbReference>
<dbReference type="PANTHER" id="PTHR42760">
    <property type="entry name" value="SHORT-CHAIN DEHYDROGENASES/REDUCTASES FAMILY MEMBER"/>
    <property type="match status" value="1"/>
</dbReference>
<dbReference type="Pfam" id="PF13561">
    <property type="entry name" value="adh_short_C2"/>
    <property type="match status" value="1"/>
</dbReference>
<dbReference type="PRINTS" id="PR00081">
    <property type="entry name" value="GDHRDH"/>
</dbReference>
<dbReference type="PRINTS" id="PR00080">
    <property type="entry name" value="SDRFAMILY"/>
</dbReference>
<dbReference type="SMART" id="SM00822">
    <property type="entry name" value="PKS_KR"/>
    <property type="match status" value="1"/>
</dbReference>
<dbReference type="SUPFAM" id="SSF51735">
    <property type="entry name" value="NAD(P)-binding Rossmann-fold domains"/>
    <property type="match status" value="1"/>
</dbReference>
<gene>
    <name type="primary">ucpA</name>
    <name type="ordered locus">STY2682</name>
    <name type="ordered locus">t0413</name>
</gene>
<feature type="chain" id="PRO_0000054803" description="Oxidoreductase UcpA">
    <location>
        <begin position="1"/>
        <end position="263"/>
    </location>
</feature>
<feature type="active site" description="Proton acceptor" evidence="1">
    <location>
        <position position="155"/>
    </location>
</feature>
<feature type="binding site" evidence="1">
    <location>
        <begin position="10"/>
        <end position="32"/>
    </location>
    <ligand>
        <name>NAD(+)</name>
        <dbReference type="ChEBI" id="CHEBI:57540"/>
    </ligand>
</feature>
<feature type="binding site" evidence="1">
    <location>
        <position position="141"/>
    </location>
    <ligand>
        <name>substrate</name>
    </ligand>
</feature>
<name>UCPA_SALTI</name>
<organism>
    <name type="scientific">Salmonella typhi</name>
    <dbReference type="NCBI Taxonomy" id="90370"/>
    <lineage>
        <taxon>Bacteria</taxon>
        <taxon>Pseudomonadati</taxon>
        <taxon>Pseudomonadota</taxon>
        <taxon>Gammaproteobacteria</taxon>
        <taxon>Enterobacterales</taxon>
        <taxon>Enterobacteriaceae</taxon>
        <taxon>Salmonella</taxon>
    </lineage>
</organism>
<sequence>MGKLTGKTALITGASQGIGEGIARVFARHGANLILLDISDEIEKLADELGGRGHRCTAVKADVRDFASVQAAVARAKETEGRIDILVNNAGVCRLGNFLDMSEEDRDFHIDINIKGVWNVTKAVLPEMIKRKDGRIVMMSSVTGDMVADPGETAYALSKAAIVGLTKSLAVEYAQSGIRVNAICPGYVRTPMAESIARQSNPDDPESVLTEMAKAIPLRRLADPLEVGELAAFLASDESSYLTGTQNVIDGGSTLPESVSVGV</sequence>
<accession>P0A2D2</accession>
<accession>P37441</accession>